<protein>
    <recommendedName>
        <fullName evidence="1">Putrescine aminotransferase</fullName>
        <shortName evidence="1">PAT</shortName>
        <shortName evidence="1">PATase</shortName>
        <ecNumber evidence="1">2.6.1.82</ecNumber>
    </recommendedName>
    <alternativeName>
        <fullName evidence="1">Cadaverine transaminase</fullName>
    </alternativeName>
    <alternativeName>
        <fullName evidence="1">Diamine transaminase</fullName>
        <ecNumber evidence="1">2.6.1.29</ecNumber>
    </alternativeName>
    <alternativeName>
        <fullName evidence="1">Putrescine transaminase</fullName>
    </alternativeName>
    <alternativeName>
        <fullName evidence="1">Putrescine--2-oxoglutaric acid transaminase</fullName>
    </alternativeName>
</protein>
<accession>B6I445</accession>
<sequence length="459" mass="49631">MNRLPSSASALACSAHALNLIEKRTLDHEEMKALNREVIEYFKEHVNPGFLEYRKSVTAGGDYGAVEWQAGGLNTLVDTQGQEFIDCLGGFGIFNVGHRNPVVVSAVQNQLAKQPLHSQELLDPLRAMLAKTLAALTPGKLKYSFFCNSGTESVEAALKLAKAYQSPRGKFTFIATSGAFHGKSLGALSATAKSTFRKPFMPLLPGFRHVPFGNIEAMRTALNECKKTGDDVAAVILEPIQGEGGVILPPPGYLTAVRKLCDEFGALMILDEVQTGMGRTGKMFACEHENVQPDILCLAKALGGGVMPIGATIATEEVFSVLFDNPFLHTTTFGGNPLACAAALATINVLLEQNLPAQAEQKGDMLLDGFRQLAREYPDLVQEARGKGMLMAIEFVDNEIGYNFASEMFRQRVLVAGTLNNAKTIRIEPPLTLTIEQCELVIKAARKALAAMRVSVEEA</sequence>
<comment type="function">
    <text evidence="1">Catalyzes the aminotransferase reaction from putrescine to 2-oxoglutarate, leading to glutamate and 4-aminobutanal, which spontaneously cyclizes to form 1-pyrroline. This is the first step in one of two pathways for putrescine degradation, where putrescine is converted into 4-aminobutanoate (gamma-aminobutyrate or GABA) via 4-aminobutanal. Also functions as a cadaverine transaminase in a a L-lysine degradation pathway to succinate that proceeds via cadaverine, glutarate and L-2-hydroxyglutarate.</text>
</comment>
<comment type="catalytic activity">
    <reaction evidence="1">
        <text>an alkane-alpha,omega-diamine + 2-oxoglutarate = an omega-aminoaldehyde + L-glutamate</text>
        <dbReference type="Rhea" id="RHEA:18217"/>
        <dbReference type="Rhea" id="RHEA-COMP:9766"/>
        <dbReference type="Rhea" id="RHEA-COMP:12750"/>
        <dbReference type="ChEBI" id="CHEBI:16810"/>
        <dbReference type="ChEBI" id="CHEBI:29985"/>
        <dbReference type="ChEBI" id="CHEBI:70977"/>
        <dbReference type="ChEBI" id="CHEBI:133427"/>
        <dbReference type="EC" id="2.6.1.29"/>
    </reaction>
    <physiologicalReaction direction="left-to-right" evidence="1">
        <dbReference type="Rhea" id="RHEA:18218"/>
    </physiologicalReaction>
</comment>
<comment type="catalytic activity">
    <reaction evidence="1">
        <text>putrescine + 2-oxoglutarate = 1-pyrroline + L-glutamate + H2O</text>
        <dbReference type="Rhea" id="RHEA:12268"/>
        <dbReference type="ChEBI" id="CHEBI:15377"/>
        <dbReference type="ChEBI" id="CHEBI:16810"/>
        <dbReference type="ChEBI" id="CHEBI:29985"/>
        <dbReference type="ChEBI" id="CHEBI:36781"/>
        <dbReference type="ChEBI" id="CHEBI:326268"/>
        <dbReference type="EC" id="2.6.1.82"/>
    </reaction>
    <physiologicalReaction direction="left-to-right" evidence="1">
        <dbReference type="Rhea" id="RHEA:12269"/>
    </physiologicalReaction>
</comment>
<comment type="catalytic activity">
    <reaction evidence="1">
        <text>cadaverine + 2-oxoglutarate = 5-aminopentanal + L-glutamate</text>
        <dbReference type="Rhea" id="RHEA:61624"/>
        <dbReference type="ChEBI" id="CHEBI:16810"/>
        <dbReference type="ChEBI" id="CHEBI:29985"/>
        <dbReference type="ChEBI" id="CHEBI:58384"/>
        <dbReference type="ChEBI" id="CHEBI:144896"/>
    </reaction>
    <physiologicalReaction direction="left-to-right" evidence="1">
        <dbReference type="Rhea" id="RHEA:61625"/>
    </physiologicalReaction>
</comment>
<comment type="cofactor">
    <cofactor evidence="1">
        <name>pyridoxal 5'-phosphate</name>
        <dbReference type="ChEBI" id="CHEBI:597326"/>
    </cofactor>
</comment>
<comment type="pathway">
    <text evidence="1">Amine and polyamine degradation; putrescine degradation; 4-aminobutanal from putrescine (transaminase route): step 1/1.</text>
</comment>
<comment type="similarity">
    <text evidence="1">Belongs to the class-III pyridoxal-phosphate-dependent aminotransferase family. Putrescine aminotransferase subfamily.</text>
</comment>
<comment type="sequence caution" evidence="2">
    <conflict type="erroneous initiation">
        <sequence resource="EMBL-CDS" id="BAG78878"/>
    </conflict>
</comment>
<reference key="1">
    <citation type="journal article" date="2008" name="DNA Res.">
        <title>Complete genome sequence and comparative analysis of the wild-type commensal Escherichia coli strain SE11 isolated from a healthy adult.</title>
        <authorList>
            <person name="Oshima K."/>
            <person name="Toh H."/>
            <person name="Ogura Y."/>
            <person name="Sasamoto H."/>
            <person name="Morita H."/>
            <person name="Park S.-H."/>
            <person name="Ooka T."/>
            <person name="Iyoda S."/>
            <person name="Taylor T.D."/>
            <person name="Hayashi T."/>
            <person name="Itoh K."/>
            <person name="Hattori M."/>
        </authorList>
    </citation>
    <scope>NUCLEOTIDE SEQUENCE [LARGE SCALE GENOMIC DNA]</scope>
    <source>
        <strain>SE11</strain>
    </source>
</reference>
<dbReference type="EC" id="2.6.1.82" evidence="1"/>
<dbReference type="EC" id="2.6.1.29" evidence="1"/>
<dbReference type="EMBL" id="AP009240">
    <property type="protein sequence ID" value="BAG78878.1"/>
    <property type="status" value="ALT_INIT"/>
    <property type="molecule type" value="Genomic_DNA"/>
</dbReference>
<dbReference type="SMR" id="B6I445"/>
<dbReference type="KEGG" id="ecy:ECSE_3354"/>
<dbReference type="HOGENOM" id="CLU_016922_10_0_6"/>
<dbReference type="UniPathway" id="UPA00188">
    <property type="reaction ID" value="UER00290"/>
</dbReference>
<dbReference type="Proteomes" id="UP000008199">
    <property type="component" value="Chromosome"/>
</dbReference>
<dbReference type="GO" id="GO:0019161">
    <property type="term" value="F:diamine transaminase activity"/>
    <property type="evidence" value="ECO:0007669"/>
    <property type="project" value="UniProtKB-EC"/>
</dbReference>
<dbReference type="GO" id="GO:0042802">
    <property type="term" value="F:identical protein binding"/>
    <property type="evidence" value="ECO:0007669"/>
    <property type="project" value="TreeGrafter"/>
</dbReference>
<dbReference type="GO" id="GO:0033094">
    <property type="term" value="F:putrescine--2-oxoglutarate transaminase activity"/>
    <property type="evidence" value="ECO:0007669"/>
    <property type="project" value="UniProtKB-UniRule"/>
</dbReference>
<dbReference type="GO" id="GO:0030170">
    <property type="term" value="F:pyridoxal phosphate binding"/>
    <property type="evidence" value="ECO:0007669"/>
    <property type="project" value="UniProtKB-UniRule"/>
</dbReference>
<dbReference type="GO" id="GO:0019477">
    <property type="term" value="P:L-lysine catabolic process"/>
    <property type="evidence" value="ECO:0007669"/>
    <property type="project" value="UniProtKB-UniRule"/>
</dbReference>
<dbReference type="GO" id="GO:0009447">
    <property type="term" value="P:putrescine catabolic process"/>
    <property type="evidence" value="ECO:0007669"/>
    <property type="project" value="UniProtKB-UniRule"/>
</dbReference>
<dbReference type="CDD" id="cd00610">
    <property type="entry name" value="OAT_like"/>
    <property type="match status" value="1"/>
</dbReference>
<dbReference type="FunFam" id="3.40.640.10:FF:000004">
    <property type="entry name" value="Acetylornithine aminotransferase"/>
    <property type="match status" value="1"/>
</dbReference>
<dbReference type="Gene3D" id="3.90.1150.10">
    <property type="entry name" value="Aspartate Aminotransferase, domain 1"/>
    <property type="match status" value="1"/>
</dbReference>
<dbReference type="Gene3D" id="3.40.640.10">
    <property type="entry name" value="Type I PLP-dependent aspartate aminotransferase-like (Major domain)"/>
    <property type="match status" value="1"/>
</dbReference>
<dbReference type="HAMAP" id="MF_01276">
    <property type="entry name" value="Putres_aminotrans_3"/>
    <property type="match status" value="1"/>
</dbReference>
<dbReference type="InterPro" id="IPR005814">
    <property type="entry name" value="Aminotrans_3"/>
</dbReference>
<dbReference type="InterPro" id="IPR049704">
    <property type="entry name" value="Aminotrans_3_PPA_site"/>
</dbReference>
<dbReference type="InterPro" id="IPR050103">
    <property type="entry name" value="Class-III_PLP-dep_AT"/>
</dbReference>
<dbReference type="InterPro" id="IPR017747">
    <property type="entry name" value="Putrescine_aminotransferase"/>
</dbReference>
<dbReference type="InterPro" id="IPR015424">
    <property type="entry name" value="PyrdxlP-dep_Trfase"/>
</dbReference>
<dbReference type="InterPro" id="IPR015421">
    <property type="entry name" value="PyrdxlP-dep_Trfase_major"/>
</dbReference>
<dbReference type="InterPro" id="IPR015422">
    <property type="entry name" value="PyrdxlP-dep_Trfase_small"/>
</dbReference>
<dbReference type="NCBIfam" id="NF008570">
    <property type="entry name" value="PRK11522.1"/>
    <property type="match status" value="1"/>
</dbReference>
<dbReference type="NCBIfam" id="TIGR03372">
    <property type="entry name" value="putres_am_tran"/>
    <property type="match status" value="1"/>
</dbReference>
<dbReference type="PANTHER" id="PTHR11986">
    <property type="entry name" value="AMINOTRANSFERASE CLASS III"/>
    <property type="match status" value="1"/>
</dbReference>
<dbReference type="PANTHER" id="PTHR11986:SF112">
    <property type="entry name" value="PUTRESCINE AMINOTRANSFERASE"/>
    <property type="match status" value="1"/>
</dbReference>
<dbReference type="Pfam" id="PF00202">
    <property type="entry name" value="Aminotran_3"/>
    <property type="match status" value="1"/>
</dbReference>
<dbReference type="PIRSF" id="PIRSF000521">
    <property type="entry name" value="Transaminase_4ab_Lys_Orn"/>
    <property type="match status" value="1"/>
</dbReference>
<dbReference type="SUPFAM" id="SSF53383">
    <property type="entry name" value="PLP-dependent transferases"/>
    <property type="match status" value="1"/>
</dbReference>
<dbReference type="PROSITE" id="PS00600">
    <property type="entry name" value="AA_TRANSFER_CLASS_3"/>
    <property type="match status" value="1"/>
</dbReference>
<evidence type="ECO:0000255" key="1">
    <source>
        <dbReference type="HAMAP-Rule" id="MF_01276"/>
    </source>
</evidence>
<evidence type="ECO:0000305" key="2"/>
<name>PAT_ECOSE</name>
<proteinExistence type="inferred from homology"/>
<organism>
    <name type="scientific">Escherichia coli (strain SE11)</name>
    <dbReference type="NCBI Taxonomy" id="409438"/>
    <lineage>
        <taxon>Bacteria</taxon>
        <taxon>Pseudomonadati</taxon>
        <taxon>Pseudomonadota</taxon>
        <taxon>Gammaproteobacteria</taxon>
        <taxon>Enterobacterales</taxon>
        <taxon>Enterobacteriaceae</taxon>
        <taxon>Escherichia</taxon>
    </lineage>
</organism>
<keyword id="KW-0032">Aminotransferase</keyword>
<keyword id="KW-0663">Pyridoxal phosphate</keyword>
<keyword id="KW-0808">Transferase</keyword>
<gene>
    <name evidence="1" type="primary">patA</name>
    <name type="ordered locus">ECSE_3354</name>
</gene>
<feature type="chain" id="PRO_0000379556" description="Putrescine aminotransferase">
    <location>
        <begin position="1"/>
        <end position="459"/>
    </location>
</feature>
<feature type="binding site" description="in other chain" evidence="1">
    <location>
        <begin position="150"/>
        <end position="151"/>
    </location>
    <ligand>
        <name>pyridoxal 5'-phosphate</name>
        <dbReference type="ChEBI" id="CHEBI:597326"/>
        <note>ligand shared between dimeric partners</note>
    </ligand>
</feature>
<feature type="binding site" description="in other chain" evidence="1">
    <location>
        <position position="274"/>
    </location>
    <ligand>
        <name>pyridoxal 5'-phosphate</name>
        <dbReference type="ChEBI" id="CHEBI:597326"/>
        <note>ligand shared between dimeric partners</note>
    </ligand>
</feature>
<feature type="binding site" evidence="1">
    <location>
        <position position="332"/>
    </location>
    <ligand>
        <name>pyridoxal 5'-phosphate</name>
        <dbReference type="ChEBI" id="CHEBI:597326"/>
        <note>ligand shared between dimeric partners</note>
    </ligand>
</feature>
<feature type="modified residue" description="N6-(pyridoxal phosphate)lysine" evidence="1">
    <location>
        <position position="300"/>
    </location>
</feature>